<comment type="subcellular location">
    <subcellularLocation>
        <location evidence="1">Cytoplasm</location>
    </subcellularLocation>
</comment>
<comment type="similarity">
    <text evidence="1">Belongs to the TACO1 family.</text>
</comment>
<protein>
    <recommendedName>
        <fullName evidence="1">Probable transcriptional regulatory protein EF_0663</fullName>
    </recommendedName>
</protein>
<reference key="1">
    <citation type="journal article" date="2003" name="Science">
        <title>Role of mobile DNA in the evolution of vancomycin-resistant Enterococcus faecalis.</title>
        <authorList>
            <person name="Paulsen I.T."/>
            <person name="Banerjei L."/>
            <person name="Myers G.S.A."/>
            <person name="Nelson K.E."/>
            <person name="Seshadri R."/>
            <person name="Read T.D."/>
            <person name="Fouts D.E."/>
            <person name="Eisen J.A."/>
            <person name="Gill S.R."/>
            <person name="Heidelberg J.F."/>
            <person name="Tettelin H."/>
            <person name="Dodson R.J."/>
            <person name="Umayam L.A."/>
            <person name="Brinkac L.M."/>
            <person name="Beanan M.J."/>
            <person name="Daugherty S.C."/>
            <person name="DeBoy R.T."/>
            <person name="Durkin S.A."/>
            <person name="Kolonay J.F."/>
            <person name="Madupu R."/>
            <person name="Nelson W.C."/>
            <person name="Vamathevan J.J."/>
            <person name="Tran B."/>
            <person name="Upton J."/>
            <person name="Hansen T."/>
            <person name="Shetty J."/>
            <person name="Khouri H.M."/>
            <person name="Utterback T.R."/>
            <person name="Radune D."/>
            <person name="Ketchum K.A."/>
            <person name="Dougherty B.A."/>
            <person name="Fraser C.M."/>
        </authorList>
    </citation>
    <scope>NUCLEOTIDE SEQUENCE [LARGE SCALE GENOMIC DNA]</scope>
    <source>
        <strain>ATCC 700802 / V583</strain>
    </source>
</reference>
<organism>
    <name type="scientific">Enterococcus faecalis (strain ATCC 700802 / V583)</name>
    <dbReference type="NCBI Taxonomy" id="226185"/>
    <lineage>
        <taxon>Bacteria</taxon>
        <taxon>Bacillati</taxon>
        <taxon>Bacillota</taxon>
        <taxon>Bacilli</taxon>
        <taxon>Lactobacillales</taxon>
        <taxon>Enterococcaceae</taxon>
        <taxon>Enterococcus</taxon>
    </lineage>
</organism>
<evidence type="ECO:0000255" key="1">
    <source>
        <dbReference type="HAMAP-Rule" id="MF_00693"/>
    </source>
</evidence>
<evidence type="ECO:0000256" key="2">
    <source>
        <dbReference type="SAM" id="MobiDB-lite"/>
    </source>
</evidence>
<name>Y663_ENTFA</name>
<sequence length="242" mass="26486">MSGHSKWSNIQGRKNAQDAKRGKIFQKVSREIYMAAKAGGPDPAMNPALRLAVDKAKSANMPNDNIARAIKKASSAGEGEHYDEVTYEGYGPGGVAVLVHALTDNRNRTATNVRVAFTRNGGSLGETGSVNYMFDRKGYIVIKREDHAIEEDDMLEVVLEAGGEDIETSPEVFEIYTAPEDFTAVRDALEQAGYSLAQAELTMVPQTLLTLNDEQKAQLERLVDKLEDDDDVSEVFTSAENL</sequence>
<accession>Q838A9</accession>
<keyword id="KW-0963">Cytoplasm</keyword>
<keyword id="KW-0238">DNA-binding</keyword>
<keyword id="KW-1185">Reference proteome</keyword>
<keyword id="KW-0804">Transcription</keyword>
<keyword id="KW-0805">Transcription regulation</keyword>
<gene>
    <name type="ordered locus">EF_0663</name>
</gene>
<proteinExistence type="inferred from homology"/>
<feature type="chain" id="PRO_0000175808" description="Probable transcriptional regulatory protein EF_0663">
    <location>
        <begin position="1"/>
        <end position="242"/>
    </location>
</feature>
<feature type="region of interest" description="Disordered" evidence="2">
    <location>
        <begin position="1"/>
        <end position="22"/>
    </location>
</feature>
<feature type="compositionally biased region" description="Polar residues" evidence="2">
    <location>
        <begin position="1"/>
        <end position="14"/>
    </location>
</feature>
<dbReference type="EMBL" id="AE016830">
    <property type="protein sequence ID" value="AAO80486.1"/>
    <property type="molecule type" value="Genomic_DNA"/>
</dbReference>
<dbReference type="RefSeq" id="NP_814415.1">
    <property type="nucleotide sequence ID" value="NC_004668.1"/>
</dbReference>
<dbReference type="RefSeq" id="WP_002370883.1">
    <property type="nucleotide sequence ID" value="NZ_KE136527.1"/>
</dbReference>
<dbReference type="SMR" id="Q838A9"/>
<dbReference type="STRING" id="226185.EF_0663"/>
<dbReference type="EnsemblBacteria" id="AAO80486">
    <property type="protein sequence ID" value="AAO80486"/>
    <property type="gene ID" value="EF_0663"/>
</dbReference>
<dbReference type="KEGG" id="efa:EF0663"/>
<dbReference type="PATRIC" id="fig|226185.45.peg.2605"/>
<dbReference type="eggNOG" id="COG0217">
    <property type="taxonomic scope" value="Bacteria"/>
</dbReference>
<dbReference type="HOGENOM" id="CLU_062974_2_2_9"/>
<dbReference type="Proteomes" id="UP000001415">
    <property type="component" value="Chromosome"/>
</dbReference>
<dbReference type="GO" id="GO:0005829">
    <property type="term" value="C:cytosol"/>
    <property type="evidence" value="ECO:0007669"/>
    <property type="project" value="TreeGrafter"/>
</dbReference>
<dbReference type="GO" id="GO:0003677">
    <property type="term" value="F:DNA binding"/>
    <property type="evidence" value="ECO:0007669"/>
    <property type="project" value="UniProtKB-UniRule"/>
</dbReference>
<dbReference type="GO" id="GO:0006355">
    <property type="term" value="P:regulation of DNA-templated transcription"/>
    <property type="evidence" value="ECO:0007669"/>
    <property type="project" value="UniProtKB-UniRule"/>
</dbReference>
<dbReference type="FunFam" id="1.10.10.200:FF:000002">
    <property type="entry name" value="Probable transcriptional regulatory protein CLM62_37755"/>
    <property type="match status" value="1"/>
</dbReference>
<dbReference type="FunFam" id="3.30.70.980:FF:000002">
    <property type="entry name" value="Probable transcriptional regulatory protein YebC"/>
    <property type="match status" value="1"/>
</dbReference>
<dbReference type="Gene3D" id="1.10.10.200">
    <property type="match status" value="1"/>
</dbReference>
<dbReference type="Gene3D" id="3.30.70.980">
    <property type="match status" value="2"/>
</dbReference>
<dbReference type="HAMAP" id="MF_00693">
    <property type="entry name" value="Transcrip_reg_TACO1"/>
    <property type="match status" value="1"/>
</dbReference>
<dbReference type="InterPro" id="IPR017856">
    <property type="entry name" value="Integrase-like_N"/>
</dbReference>
<dbReference type="InterPro" id="IPR048300">
    <property type="entry name" value="TACO1_YebC-like_2nd/3rd_dom"/>
</dbReference>
<dbReference type="InterPro" id="IPR049083">
    <property type="entry name" value="TACO1_YebC_N"/>
</dbReference>
<dbReference type="InterPro" id="IPR002876">
    <property type="entry name" value="Transcrip_reg_TACO1-like"/>
</dbReference>
<dbReference type="InterPro" id="IPR026564">
    <property type="entry name" value="Transcrip_reg_TACO1-like_dom3"/>
</dbReference>
<dbReference type="InterPro" id="IPR029072">
    <property type="entry name" value="YebC-like"/>
</dbReference>
<dbReference type="NCBIfam" id="NF001030">
    <property type="entry name" value="PRK00110.1"/>
    <property type="match status" value="1"/>
</dbReference>
<dbReference type="NCBIfam" id="NF009044">
    <property type="entry name" value="PRK12378.1"/>
    <property type="match status" value="1"/>
</dbReference>
<dbReference type="NCBIfam" id="TIGR01033">
    <property type="entry name" value="YebC/PmpR family DNA-binding transcriptional regulator"/>
    <property type="match status" value="1"/>
</dbReference>
<dbReference type="PANTHER" id="PTHR12532:SF6">
    <property type="entry name" value="TRANSCRIPTIONAL REGULATORY PROTEIN YEBC-RELATED"/>
    <property type="match status" value="1"/>
</dbReference>
<dbReference type="PANTHER" id="PTHR12532">
    <property type="entry name" value="TRANSLATIONAL ACTIVATOR OF CYTOCHROME C OXIDASE 1"/>
    <property type="match status" value="1"/>
</dbReference>
<dbReference type="Pfam" id="PF20772">
    <property type="entry name" value="TACO1_YebC_N"/>
    <property type="match status" value="1"/>
</dbReference>
<dbReference type="Pfam" id="PF01709">
    <property type="entry name" value="Transcrip_reg"/>
    <property type="match status" value="1"/>
</dbReference>
<dbReference type="SUPFAM" id="SSF75625">
    <property type="entry name" value="YebC-like"/>
    <property type="match status" value="1"/>
</dbReference>